<protein>
    <recommendedName>
        <fullName evidence="1">Large ribosomal subunit protein uL24</fullName>
    </recommendedName>
    <alternativeName>
        <fullName evidence="2">50S ribosomal protein L24</fullName>
    </alternativeName>
</protein>
<gene>
    <name evidence="1" type="primary">rplX</name>
    <name type="ordered locus">ECED1_3972</name>
</gene>
<comment type="function">
    <text evidence="1">One of two assembly initiator proteins, it binds directly to the 5'-end of the 23S rRNA, where it nucleates assembly of the 50S subunit.</text>
</comment>
<comment type="function">
    <text evidence="1">One of the proteins that surrounds the polypeptide exit tunnel on the outside of the subunit.</text>
</comment>
<comment type="subunit">
    <text evidence="1">Part of the 50S ribosomal subunit.</text>
</comment>
<comment type="similarity">
    <text evidence="1">Belongs to the universal ribosomal protein uL24 family.</text>
</comment>
<accession>B7N193</accession>
<evidence type="ECO:0000255" key="1">
    <source>
        <dbReference type="HAMAP-Rule" id="MF_01326"/>
    </source>
</evidence>
<evidence type="ECO:0000305" key="2"/>
<organism>
    <name type="scientific">Escherichia coli O81 (strain ED1a)</name>
    <dbReference type="NCBI Taxonomy" id="585397"/>
    <lineage>
        <taxon>Bacteria</taxon>
        <taxon>Pseudomonadati</taxon>
        <taxon>Pseudomonadota</taxon>
        <taxon>Gammaproteobacteria</taxon>
        <taxon>Enterobacterales</taxon>
        <taxon>Enterobacteriaceae</taxon>
        <taxon>Escherichia</taxon>
    </lineage>
</organism>
<keyword id="KW-0687">Ribonucleoprotein</keyword>
<keyword id="KW-0689">Ribosomal protein</keyword>
<keyword id="KW-0694">RNA-binding</keyword>
<keyword id="KW-0699">rRNA-binding</keyword>
<dbReference type="EMBL" id="CU928162">
    <property type="protein sequence ID" value="CAR10111.2"/>
    <property type="molecule type" value="Genomic_DNA"/>
</dbReference>
<dbReference type="RefSeq" id="WP_000729186.1">
    <property type="nucleotide sequence ID" value="NC_011745.1"/>
</dbReference>
<dbReference type="SMR" id="B7N193"/>
<dbReference type="KEGG" id="ecq:ECED1_3972"/>
<dbReference type="HOGENOM" id="CLU_093315_2_2_6"/>
<dbReference type="Proteomes" id="UP000000748">
    <property type="component" value="Chromosome"/>
</dbReference>
<dbReference type="GO" id="GO:0005829">
    <property type="term" value="C:cytosol"/>
    <property type="evidence" value="ECO:0007669"/>
    <property type="project" value="UniProtKB-ARBA"/>
</dbReference>
<dbReference type="GO" id="GO:1990904">
    <property type="term" value="C:ribonucleoprotein complex"/>
    <property type="evidence" value="ECO:0007669"/>
    <property type="project" value="UniProtKB-KW"/>
</dbReference>
<dbReference type="GO" id="GO:0005840">
    <property type="term" value="C:ribosome"/>
    <property type="evidence" value="ECO:0007669"/>
    <property type="project" value="UniProtKB-KW"/>
</dbReference>
<dbReference type="GO" id="GO:0019843">
    <property type="term" value="F:rRNA binding"/>
    <property type="evidence" value="ECO:0007669"/>
    <property type="project" value="UniProtKB-UniRule"/>
</dbReference>
<dbReference type="GO" id="GO:0003735">
    <property type="term" value="F:structural constituent of ribosome"/>
    <property type="evidence" value="ECO:0007669"/>
    <property type="project" value="InterPro"/>
</dbReference>
<dbReference type="GO" id="GO:0006412">
    <property type="term" value="P:translation"/>
    <property type="evidence" value="ECO:0007669"/>
    <property type="project" value="UniProtKB-UniRule"/>
</dbReference>
<dbReference type="CDD" id="cd06089">
    <property type="entry name" value="KOW_RPL26"/>
    <property type="match status" value="1"/>
</dbReference>
<dbReference type="FunFam" id="2.30.30.30:FF:000004">
    <property type="entry name" value="50S ribosomal protein L24"/>
    <property type="match status" value="1"/>
</dbReference>
<dbReference type="Gene3D" id="2.30.30.30">
    <property type="match status" value="1"/>
</dbReference>
<dbReference type="HAMAP" id="MF_01326_B">
    <property type="entry name" value="Ribosomal_uL24_B"/>
    <property type="match status" value="1"/>
</dbReference>
<dbReference type="InterPro" id="IPR005824">
    <property type="entry name" value="KOW"/>
</dbReference>
<dbReference type="InterPro" id="IPR014722">
    <property type="entry name" value="Rib_uL2_dom2"/>
</dbReference>
<dbReference type="InterPro" id="IPR003256">
    <property type="entry name" value="Ribosomal_uL24"/>
</dbReference>
<dbReference type="InterPro" id="IPR005825">
    <property type="entry name" value="Ribosomal_uL24_CS"/>
</dbReference>
<dbReference type="InterPro" id="IPR041988">
    <property type="entry name" value="Ribosomal_uL24_KOW"/>
</dbReference>
<dbReference type="InterPro" id="IPR008991">
    <property type="entry name" value="Translation_prot_SH3-like_sf"/>
</dbReference>
<dbReference type="NCBIfam" id="TIGR01079">
    <property type="entry name" value="rplX_bact"/>
    <property type="match status" value="1"/>
</dbReference>
<dbReference type="PANTHER" id="PTHR12903">
    <property type="entry name" value="MITOCHONDRIAL RIBOSOMAL PROTEIN L24"/>
    <property type="match status" value="1"/>
</dbReference>
<dbReference type="Pfam" id="PF00467">
    <property type="entry name" value="KOW"/>
    <property type="match status" value="1"/>
</dbReference>
<dbReference type="Pfam" id="PF17136">
    <property type="entry name" value="ribosomal_L24"/>
    <property type="match status" value="1"/>
</dbReference>
<dbReference type="SMART" id="SM00739">
    <property type="entry name" value="KOW"/>
    <property type="match status" value="1"/>
</dbReference>
<dbReference type="SUPFAM" id="SSF50104">
    <property type="entry name" value="Translation proteins SH3-like domain"/>
    <property type="match status" value="1"/>
</dbReference>
<dbReference type="PROSITE" id="PS01108">
    <property type="entry name" value="RIBOSOMAL_L24"/>
    <property type="match status" value="1"/>
</dbReference>
<proteinExistence type="inferred from homology"/>
<name>RL24_ECO81</name>
<reference key="1">
    <citation type="journal article" date="2009" name="PLoS Genet.">
        <title>Organised genome dynamics in the Escherichia coli species results in highly diverse adaptive paths.</title>
        <authorList>
            <person name="Touchon M."/>
            <person name="Hoede C."/>
            <person name="Tenaillon O."/>
            <person name="Barbe V."/>
            <person name="Baeriswyl S."/>
            <person name="Bidet P."/>
            <person name="Bingen E."/>
            <person name="Bonacorsi S."/>
            <person name="Bouchier C."/>
            <person name="Bouvet O."/>
            <person name="Calteau A."/>
            <person name="Chiapello H."/>
            <person name="Clermont O."/>
            <person name="Cruveiller S."/>
            <person name="Danchin A."/>
            <person name="Diard M."/>
            <person name="Dossat C."/>
            <person name="Karoui M.E."/>
            <person name="Frapy E."/>
            <person name="Garry L."/>
            <person name="Ghigo J.M."/>
            <person name="Gilles A.M."/>
            <person name="Johnson J."/>
            <person name="Le Bouguenec C."/>
            <person name="Lescat M."/>
            <person name="Mangenot S."/>
            <person name="Martinez-Jehanne V."/>
            <person name="Matic I."/>
            <person name="Nassif X."/>
            <person name="Oztas S."/>
            <person name="Petit M.A."/>
            <person name="Pichon C."/>
            <person name="Rouy Z."/>
            <person name="Ruf C.S."/>
            <person name="Schneider D."/>
            <person name="Tourret J."/>
            <person name="Vacherie B."/>
            <person name="Vallenet D."/>
            <person name="Medigue C."/>
            <person name="Rocha E.P.C."/>
            <person name="Denamur E."/>
        </authorList>
    </citation>
    <scope>NUCLEOTIDE SEQUENCE [LARGE SCALE GENOMIC DNA]</scope>
    <source>
        <strain>ED1a</strain>
    </source>
</reference>
<feature type="chain" id="PRO_1000165945" description="Large ribosomal subunit protein uL24">
    <location>
        <begin position="1"/>
        <end position="104"/>
    </location>
</feature>
<sequence length="104" mass="11346">MAAKIRRDDEVIVLTGKDKGKRGKVKNVLSSGKVIVEGINLVKKHQKPVPALNQPGGIVEKEAAIQVSNVAIFNATTGKADRVGFRFEDGKKVRFFKSNSETIK</sequence>